<proteinExistence type="evidence at transcript level"/>
<comment type="subcellular location">
    <subcellularLocation>
        <location evidence="1">Secreted</location>
    </subcellularLocation>
</comment>
<comment type="tissue specificity">
    <text>Expressed by the venom gland.</text>
</comment>
<comment type="PTM">
    <text evidence="1">Contains 4 disulfide bonds.</text>
</comment>
<comment type="similarity">
    <text evidence="3">Belongs to the neurotoxin 19 (CSTX) family. 06 (U6-Lctx) subfamily.</text>
</comment>
<sequence>MKLLLFTALVLVVISLIEVEAENERACIPLEKECTKTPGNCCSGLRCDCYRRFEQGVAKGIQCWCIEKDVTYKGV</sequence>
<feature type="signal peptide" evidence="2">
    <location>
        <begin position="1"/>
        <end position="21"/>
    </location>
</feature>
<feature type="propeptide" id="PRO_0000401731" evidence="1">
    <location>
        <begin position="22"/>
        <end position="25"/>
    </location>
</feature>
<feature type="chain" id="PRO_0000401732" description="U6-lycotoxin-Ls1e">
    <location>
        <begin position="26"/>
        <end position="75"/>
    </location>
</feature>
<organism>
    <name type="scientific">Lycosa singoriensis</name>
    <name type="common">Wolf spider</name>
    <name type="synonym">Aranea singoriensis</name>
    <dbReference type="NCBI Taxonomy" id="434756"/>
    <lineage>
        <taxon>Eukaryota</taxon>
        <taxon>Metazoa</taxon>
        <taxon>Ecdysozoa</taxon>
        <taxon>Arthropoda</taxon>
        <taxon>Chelicerata</taxon>
        <taxon>Arachnida</taxon>
        <taxon>Araneae</taxon>
        <taxon>Araneomorphae</taxon>
        <taxon>Entelegynae</taxon>
        <taxon>Lycosoidea</taxon>
        <taxon>Lycosidae</taxon>
        <taxon>Lycosa</taxon>
    </lineage>
</organism>
<protein>
    <recommendedName>
        <fullName>U6-lycotoxin-Ls1e</fullName>
    </recommendedName>
    <alternativeName>
        <fullName>Toxin-like structure LSTX-F5</fullName>
    </alternativeName>
</protein>
<keyword id="KW-1015">Disulfide bond</keyword>
<keyword id="KW-0964">Secreted</keyword>
<keyword id="KW-0732">Signal</keyword>
<keyword id="KW-0800">Toxin</keyword>
<evidence type="ECO:0000250" key="1"/>
<evidence type="ECO:0000255" key="2"/>
<evidence type="ECO:0000305" key="3"/>
<reference key="1">
    <citation type="journal article" date="2010" name="Zoology">
        <title>Transcriptome analysis of the venom glands of the Chinese wolf spider Lycosa singoriensis.</title>
        <authorList>
            <person name="Zhang Y."/>
            <person name="Chen J."/>
            <person name="Tang X."/>
            <person name="Wang F."/>
            <person name="Jiang L."/>
            <person name="Xiong X."/>
            <person name="Wang M."/>
            <person name="Rong M."/>
            <person name="Liu Z."/>
            <person name="Liang S."/>
        </authorList>
    </citation>
    <scope>NUCLEOTIDE SEQUENCE [LARGE SCALE MRNA]</scope>
    <source>
        <tissue>Venom gland</tissue>
    </source>
</reference>
<dbReference type="EMBL" id="EU926039">
    <property type="protein sequence ID" value="ACI41371.1"/>
    <property type="molecule type" value="mRNA"/>
</dbReference>
<dbReference type="EMBL" id="FM864043">
    <property type="protein sequence ID" value="CAS03640.1"/>
    <property type="molecule type" value="mRNA"/>
</dbReference>
<dbReference type="SMR" id="B6DCV5"/>
<dbReference type="ArachnoServer" id="AS000977">
    <property type="toxin name" value="U6-lycotoxin-Ls1e"/>
</dbReference>
<dbReference type="GO" id="GO:0005576">
    <property type="term" value="C:extracellular region"/>
    <property type="evidence" value="ECO:0007669"/>
    <property type="project" value="UniProtKB-SubCell"/>
</dbReference>
<dbReference type="GO" id="GO:0090729">
    <property type="term" value="F:toxin activity"/>
    <property type="evidence" value="ECO:0007669"/>
    <property type="project" value="UniProtKB-KW"/>
</dbReference>
<dbReference type="InterPro" id="IPR019553">
    <property type="entry name" value="Spider_toxin_CSTX_knottin"/>
</dbReference>
<dbReference type="Pfam" id="PF10530">
    <property type="entry name" value="Toxin_35"/>
    <property type="match status" value="1"/>
</dbReference>
<accession>B6DCV5</accession>
<name>TX605_LYCSI</name>